<comment type="function">
    <text evidence="1">Specifically methylates the N7 position of guanine in position 527 of 16S rRNA.</text>
</comment>
<comment type="catalytic activity">
    <reaction evidence="1">
        <text>guanosine(527) in 16S rRNA + S-adenosyl-L-methionine = N(7)-methylguanosine(527) in 16S rRNA + S-adenosyl-L-homocysteine</text>
        <dbReference type="Rhea" id="RHEA:42732"/>
        <dbReference type="Rhea" id="RHEA-COMP:10209"/>
        <dbReference type="Rhea" id="RHEA-COMP:10210"/>
        <dbReference type="ChEBI" id="CHEBI:57856"/>
        <dbReference type="ChEBI" id="CHEBI:59789"/>
        <dbReference type="ChEBI" id="CHEBI:74269"/>
        <dbReference type="ChEBI" id="CHEBI:74480"/>
        <dbReference type="EC" id="2.1.1.170"/>
    </reaction>
</comment>
<comment type="subcellular location">
    <subcellularLocation>
        <location evidence="1">Cytoplasm</location>
    </subcellularLocation>
</comment>
<comment type="similarity">
    <text evidence="1">Belongs to the methyltransferase superfamily. RNA methyltransferase RsmG family.</text>
</comment>
<accession>Q1GP62</accession>
<feature type="chain" id="PRO_0000335432" description="Ribosomal RNA small subunit methyltransferase G">
    <location>
        <begin position="1"/>
        <end position="233"/>
    </location>
</feature>
<feature type="binding site" evidence="1">
    <location>
        <position position="96"/>
    </location>
    <ligand>
        <name>S-adenosyl-L-methionine</name>
        <dbReference type="ChEBI" id="CHEBI:59789"/>
    </ligand>
</feature>
<feature type="binding site" evidence="1">
    <location>
        <position position="101"/>
    </location>
    <ligand>
        <name>S-adenosyl-L-methionine</name>
        <dbReference type="ChEBI" id="CHEBI:59789"/>
    </ligand>
</feature>
<feature type="binding site" evidence="1">
    <location>
        <begin position="146"/>
        <end position="147"/>
    </location>
    <ligand>
        <name>S-adenosyl-L-methionine</name>
        <dbReference type="ChEBI" id="CHEBI:59789"/>
    </ligand>
</feature>
<feature type="binding site" evidence="1">
    <location>
        <position position="160"/>
    </location>
    <ligand>
        <name>S-adenosyl-L-methionine</name>
        <dbReference type="ChEBI" id="CHEBI:59789"/>
    </ligand>
</feature>
<evidence type="ECO:0000255" key="1">
    <source>
        <dbReference type="HAMAP-Rule" id="MF_00074"/>
    </source>
</evidence>
<organism>
    <name type="scientific">Sphingopyxis alaskensis (strain DSM 13593 / LMG 18877 / RB2256)</name>
    <name type="common">Sphingomonas alaskensis</name>
    <dbReference type="NCBI Taxonomy" id="317655"/>
    <lineage>
        <taxon>Bacteria</taxon>
        <taxon>Pseudomonadati</taxon>
        <taxon>Pseudomonadota</taxon>
        <taxon>Alphaproteobacteria</taxon>
        <taxon>Sphingomonadales</taxon>
        <taxon>Sphingomonadaceae</taxon>
        <taxon>Sphingopyxis</taxon>
    </lineage>
</organism>
<dbReference type="EC" id="2.1.1.170" evidence="1"/>
<dbReference type="EMBL" id="CP000356">
    <property type="protein sequence ID" value="ABF54560.1"/>
    <property type="molecule type" value="Genomic_DNA"/>
</dbReference>
<dbReference type="RefSeq" id="WP_011543124.1">
    <property type="nucleotide sequence ID" value="NC_008048.1"/>
</dbReference>
<dbReference type="SMR" id="Q1GP62"/>
<dbReference type="STRING" id="317655.Sala_2855"/>
<dbReference type="KEGG" id="sal:Sala_2855"/>
<dbReference type="eggNOG" id="COG0357">
    <property type="taxonomic scope" value="Bacteria"/>
</dbReference>
<dbReference type="HOGENOM" id="CLU_065341_1_1_5"/>
<dbReference type="OrthoDB" id="9808773at2"/>
<dbReference type="Proteomes" id="UP000006578">
    <property type="component" value="Chromosome"/>
</dbReference>
<dbReference type="GO" id="GO:0005829">
    <property type="term" value="C:cytosol"/>
    <property type="evidence" value="ECO:0007669"/>
    <property type="project" value="TreeGrafter"/>
</dbReference>
<dbReference type="GO" id="GO:0070043">
    <property type="term" value="F:rRNA (guanine-N7-)-methyltransferase activity"/>
    <property type="evidence" value="ECO:0007669"/>
    <property type="project" value="UniProtKB-UniRule"/>
</dbReference>
<dbReference type="Gene3D" id="3.40.50.150">
    <property type="entry name" value="Vaccinia Virus protein VP39"/>
    <property type="match status" value="1"/>
</dbReference>
<dbReference type="HAMAP" id="MF_00074">
    <property type="entry name" value="16SrRNA_methyltr_G"/>
    <property type="match status" value="1"/>
</dbReference>
<dbReference type="InterPro" id="IPR003682">
    <property type="entry name" value="rRNA_ssu_MeTfrase_G"/>
</dbReference>
<dbReference type="InterPro" id="IPR029063">
    <property type="entry name" value="SAM-dependent_MTases_sf"/>
</dbReference>
<dbReference type="NCBIfam" id="TIGR00138">
    <property type="entry name" value="rsmG_gidB"/>
    <property type="match status" value="1"/>
</dbReference>
<dbReference type="PANTHER" id="PTHR31760">
    <property type="entry name" value="S-ADENOSYL-L-METHIONINE-DEPENDENT METHYLTRANSFERASES SUPERFAMILY PROTEIN"/>
    <property type="match status" value="1"/>
</dbReference>
<dbReference type="PANTHER" id="PTHR31760:SF0">
    <property type="entry name" value="S-ADENOSYL-L-METHIONINE-DEPENDENT METHYLTRANSFERASES SUPERFAMILY PROTEIN"/>
    <property type="match status" value="1"/>
</dbReference>
<dbReference type="Pfam" id="PF02527">
    <property type="entry name" value="GidB"/>
    <property type="match status" value="1"/>
</dbReference>
<dbReference type="SUPFAM" id="SSF53335">
    <property type="entry name" value="S-adenosyl-L-methionine-dependent methyltransferases"/>
    <property type="match status" value="1"/>
</dbReference>
<sequence length="233" mass="25591">MIIPHRADGGKNDVSAAELLKDERAARGWLTQAFAPSTEQWAQIERFVTMLIAENAKQNLIAASTIPAIWARHIADSAQLLALDTREGEGLWIDLGSGPGLPGLVVAILSERPMLLVESRRRRCDFLRAVVAELALDHVEVAEAPLERVATRPAATISARAFAPLDRLIDLSARFSTESTRWLLPKGRNAVKELALLPEPWQRMFHVEQSRTDAESGILVGTGRIAPKKRGKA</sequence>
<protein>
    <recommendedName>
        <fullName evidence="1">Ribosomal RNA small subunit methyltransferase G</fullName>
        <ecNumber evidence="1">2.1.1.170</ecNumber>
    </recommendedName>
    <alternativeName>
        <fullName evidence="1">16S rRNA 7-methylguanosine methyltransferase</fullName>
        <shortName evidence="1">16S rRNA m7G methyltransferase</shortName>
    </alternativeName>
</protein>
<name>RSMG_SPHAL</name>
<proteinExistence type="inferred from homology"/>
<keyword id="KW-0963">Cytoplasm</keyword>
<keyword id="KW-0489">Methyltransferase</keyword>
<keyword id="KW-1185">Reference proteome</keyword>
<keyword id="KW-0698">rRNA processing</keyword>
<keyword id="KW-0949">S-adenosyl-L-methionine</keyword>
<keyword id="KW-0808">Transferase</keyword>
<reference key="1">
    <citation type="journal article" date="2009" name="Proc. Natl. Acad. Sci. U.S.A.">
        <title>The genomic basis of trophic strategy in marine bacteria.</title>
        <authorList>
            <person name="Lauro F.M."/>
            <person name="McDougald D."/>
            <person name="Thomas T."/>
            <person name="Williams T.J."/>
            <person name="Egan S."/>
            <person name="Rice S."/>
            <person name="DeMaere M.Z."/>
            <person name="Ting L."/>
            <person name="Ertan H."/>
            <person name="Johnson J."/>
            <person name="Ferriera S."/>
            <person name="Lapidus A."/>
            <person name="Anderson I."/>
            <person name="Kyrpides N."/>
            <person name="Munk A.C."/>
            <person name="Detter C."/>
            <person name="Han C.S."/>
            <person name="Brown M.V."/>
            <person name="Robb F.T."/>
            <person name="Kjelleberg S."/>
            <person name="Cavicchioli R."/>
        </authorList>
    </citation>
    <scope>NUCLEOTIDE SEQUENCE [LARGE SCALE GENOMIC DNA]</scope>
    <source>
        <strain>DSM 13593 / LMG 18877 / RB2256</strain>
    </source>
</reference>
<gene>
    <name evidence="1" type="primary">rsmG</name>
    <name type="ordered locus">Sala_2855</name>
</gene>